<gene>
    <name evidence="1" type="primary">metG1</name>
    <name type="synonym">metG</name>
    <name type="ordered locus">BC_0043</name>
</gene>
<organism>
    <name type="scientific">Bacillus cereus (strain ATCC 14579 / DSM 31 / CCUG 7414 / JCM 2152 / NBRC 15305 / NCIMB 9373 / NCTC 2599 / NRRL B-3711)</name>
    <dbReference type="NCBI Taxonomy" id="226900"/>
    <lineage>
        <taxon>Bacteria</taxon>
        <taxon>Bacillati</taxon>
        <taxon>Bacillota</taxon>
        <taxon>Bacilli</taxon>
        <taxon>Bacillales</taxon>
        <taxon>Bacillaceae</taxon>
        <taxon>Bacillus</taxon>
        <taxon>Bacillus cereus group</taxon>
    </lineage>
</organism>
<comment type="function">
    <text evidence="1">Is required not only for elongation of protein synthesis but also for the initiation of all mRNA translation through initiator tRNA(fMet) aminoacylation.</text>
</comment>
<comment type="catalytic activity">
    <reaction evidence="1">
        <text>tRNA(Met) + L-methionine + ATP = L-methionyl-tRNA(Met) + AMP + diphosphate</text>
        <dbReference type="Rhea" id="RHEA:13481"/>
        <dbReference type="Rhea" id="RHEA-COMP:9667"/>
        <dbReference type="Rhea" id="RHEA-COMP:9698"/>
        <dbReference type="ChEBI" id="CHEBI:30616"/>
        <dbReference type="ChEBI" id="CHEBI:33019"/>
        <dbReference type="ChEBI" id="CHEBI:57844"/>
        <dbReference type="ChEBI" id="CHEBI:78442"/>
        <dbReference type="ChEBI" id="CHEBI:78530"/>
        <dbReference type="ChEBI" id="CHEBI:456215"/>
        <dbReference type="EC" id="6.1.1.10"/>
    </reaction>
</comment>
<comment type="subunit">
    <text evidence="1">Homodimer.</text>
</comment>
<comment type="subcellular location">
    <subcellularLocation>
        <location evidence="1">Cytoplasm</location>
    </subcellularLocation>
</comment>
<comment type="similarity">
    <text evidence="1">Belongs to the class-I aminoacyl-tRNA synthetase family. MetG type 2B subfamily.</text>
</comment>
<keyword id="KW-0030">Aminoacyl-tRNA synthetase</keyword>
<keyword id="KW-0067">ATP-binding</keyword>
<keyword id="KW-0963">Cytoplasm</keyword>
<keyword id="KW-0436">Ligase</keyword>
<keyword id="KW-0547">Nucleotide-binding</keyword>
<keyword id="KW-0648">Protein biosynthesis</keyword>
<keyword id="KW-1185">Reference proteome</keyword>
<keyword id="KW-0694">RNA-binding</keyword>
<keyword id="KW-0820">tRNA-binding</keyword>
<sequence>MTEENKSFYITTPIYYPSGKLHIGHAYTTVAGDAMARYKRMQGYNVHYLTGTDEHGQKIQKKAEELNITPQAYVDNIVAGIKELWEKMNISYDDFIRTTEDRHKDVVEKIFKQLVDQGDIYLDEYEGWYSVQDETFYTEHQLVDPIMEGDKVVGGKSPDSGHDVELVREESYFFRMGKYVDRLLKFYEDNPHFIQPESRKNEMINNFIKPGLEDLAVSRTSFDWGVRVPGNPKHVIYVWVDALSNYITALGYGTANEEKYKKFWPADVHLVGKEIVRFHTIYWPIILMALDLPLPKKVFAHGWILMKDGKMSKSKGNVVDPVTLIDRYGLDALRYYLLREVPFGSDGVFTPEGFVERINFDLANDLGNLLNRTVAMIDKYFSGEIPAFKANVTEFDETLVAFAQDTLKKVEEAMENMEFSVALGSIWQLVSRTNKYIDETQPWVLAKDENDREKLASVMAHLAEVLRQTGIMLMPFLTVAPSKMFAQLGLTDEAHKSWESLSTIGCIPAGTKVEKGNPIFPRLEMEVEVEYIKEQMKSSAPKVEEKKEEEPKAEEITIDDFFKVELRVAEVLSAEPVKKADKLLKIQLDLGTEKRQVVSGIAKFYSPEDLKGKKVICVTNLKPVKLRGELSQGMILAGEENGVLSLASIDQNLPNGTKIK</sequence>
<accession>Q81JA8</accession>
<name>SYM1_BACCR</name>
<reference key="1">
    <citation type="journal article" date="2003" name="Nature">
        <title>Genome sequence of Bacillus cereus and comparative analysis with Bacillus anthracis.</title>
        <authorList>
            <person name="Ivanova N."/>
            <person name="Sorokin A."/>
            <person name="Anderson I."/>
            <person name="Galleron N."/>
            <person name="Candelon B."/>
            <person name="Kapatral V."/>
            <person name="Bhattacharyya A."/>
            <person name="Reznik G."/>
            <person name="Mikhailova N."/>
            <person name="Lapidus A."/>
            <person name="Chu L."/>
            <person name="Mazur M."/>
            <person name="Goltsman E."/>
            <person name="Larsen N."/>
            <person name="D'Souza M."/>
            <person name="Walunas T."/>
            <person name="Grechkin Y."/>
            <person name="Pusch G."/>
            <person name="Haselkorn R."/>
            <person name="Fonstein M."/>
            <person name="Ehrlich S.D."/>
            <person name="Overbeek R."/>
            <person name="Kyrpides N.C."/>
        </authorList>
    </citation>
    <scope>NUCLEOTIDE SEQUENCE [LARGE SCALE GENOMIC DNA]</scope>
    <source>
        <strain>ATCC 14579 / DSM 31 / CCUG 7414 / JCM 2152 / NBRC 15305 / NCIMB 9373 / NCTC 2599 / NRRL B-3711</strain>
    </source>
</reference>
<protein>
    <recommendedName>
        <fullName evidence="1">Methionine--tRNA ligase 1</fullName>
        <ecNumber evidence="1">6.1.1.10</ecNumber>
    </recommendedName>
    <alternativeName>
        <fullName evidence="1">Methionyl-tRNA synthetase 1</fullName>
        <shortName evidence="1">MetRS 1</shortName>
    </alternativeName>
</protein>
<feature type="chain" id="PRO_0000139208" description="Methionine--tRNA ligase 1">
    <location>
        <begin position="1"/>
        <end position="660"/>
    </location>
</feature>
<feature type="domain" description="tRNA-binding" evidence="1">
    <location>
        <begin position="560"/>
        <end position="660"/>
    </location>
</feature>
<feature type="short sequence motif" description="'HIGH' region">
    <location>
        <begin position="15"/>
        <end position="25"/>
    </location>
</feature>
<feature type="short sequence motif" description="'KMSKS' region">
    <location>
        <begin position="310"/>
        <end position="314"/>
    </location>
</feature>
<feature type="binding site" evidence="1">
    <location>
        <position position="313"/>
    </location>
    <ligand>
        <name>ATP</name>
        <dbReference type="ChEBI" id="CHEBI:30616"/>
    </ligand>
</feature>
<evidence type="ECO:0000255" key="1">
    <source>
        <dbReference type="HAMAP-Rule" id="MF_01228"/>
    </source>
</evidence>
<proteinExistence type="inferred from homology"/>
<dbReference type="EC" id="6.1.1.10" evidence="1"/>
<dbReference type="EMBL" id="AE016877">
    <property type="protein sequence ID" value="AAP07141.1"/>
    <property type="molecule type" value="Genomic_DNA"/>
</dbReference>
<dbReference type="RefSeq" id="NP_829940.1">
    <property type="nucleotide sequence ID" value="NC_004722.1"/>
</dbReference>
<dbReference type="RefSeq" id="WP_000134141.1">
    <property type="nucleotide sequence ID" value="NZ_CP138336.1"/>
</dbReference>
<dbReference type="SMR" id="Q81JA8"/>
<dbReference type="STRING" id="226900.BC_0043"/>
<dbReference type="KEGG" id="bce:BC0043"/>
<dbReference type="PATRIC" id="fig|226900.8.peg.60"/>
<dbReference type="HOGENOM" id="CLU_009710_9_4_9"/>
<dbReference type="Proteomes" id="UP000001417">
    <property type="component" value="Chromosome"/>
</dbReference>
<dbReference type="GO" id="GO:0005737">
    <property type="term" value="C:cytoplasm"/>
    <property type="evidence" value="ECO:0007669"/>
    <property type="project" value="UniProtKB-SubCell"/>
</dbReference>
<dbReference type="GO" id="GO:0005524">
    <property type="term" value="F:ATP binding"/>
    <property type="evidence" value="ECO:0007669"/>
    <property type="project" value="UniProtKB-UniRule"/>
</dbReference>
<dbReference type="GO" id="GO:0004825">
    <property type="term" value="F:methionine-tRNA ligase activity"/>
    <property type="evidence" value="ECO:0000318"/>
    <property type="project" value="GO_Central"/>
</dbReference>
<dbReference type="GO" id="GO:0000049">
    <property type="term" value="F:tRNA binding"/>
    <property type="evidence" value="ECO:0007669"/>
    <property type="project" value="UniProtKB-KW"/>
</dbReference>
<dbReference type="GO" id="GO:0006431">
    <property type="term" value="P:methionyl-tRNA aminoacylation"/>
    <property type="evidence" value="ECO:0000318"/>
    <property type="project" value="GO_Central"/>
</dbReference>
<dbReference type="CDD" id="cd07957">
    <property type="entry name" value="Anticodon_Ia_Met"/>
    <property type="match status" value="1"/>
</dbReference>
<dbReference type="CDD" id="cd00814">
    <property type="entry name" value="MetRS_core"/>
    <property type="match status" value="1"/>
</dbReference>
<dbReference type="CDD" id="cd02800">
    <property type="entry name" value="tRNA_bind_EcMetRS_like"/>
    <property type="match status" value="1"/>
</dbReference>
<dbReference type="FunFam" id="1.10.730.10:FF:000026">
    <property type="entry name" value="Methionine--tRNA ligase"/>
    <property type="match status" value="1"/>
</dbReference>
<dbReference type="FunFam" id="2.170.220.10:FF:000002">
    <property type="entry name" value="Methionine--tRNA ligase"/>
    <property type="match status" value="1"/>
</dbReference>
<dbReference type="FunFam" id="2.40.50.140:FF:000042">
    <property type="entry name" value="Methionine--tRNA ligase"/>
    <property type="match status" value="1"/>
</dbReference>
<dbReference type="Gene3D" id="2.170.220.10">
    <property type="match status" value="1"/>
</dbReference>
<dbReference type="Gene3D" id="3.40.50.620">
    <property type="entry name" value="HUPs"/>
    <property type="match status" value="1"/>
</dbReference>
<dbReference type="Gene3D" id="1.10.730.10">
    <property type="entry name" value="Isoleucyl-tRNA Synthetase, Domain 1"/>
    <property type="match status" value="1"/>
</dbReference>
<dbReference type="Gene3D" id="2.40.50.140">
    <property type="entry name" value="Nucleic acid-binding proteins"/>
    <property type="match status" value="1"/>
</dbReference>
<dbReference type="HAMAP" id="MF_01228">
    <property type="entry name" value="Met_tRNA_synth_type2"/>
    <property type="match status" value="1"/>
</dbReference>
<dbReference type="InterPro" id="IPR001412">
    <property type="entry name" value="aa-tRNA-synth_I_CS"/>
</dbReference>
<dbReference type="InterPro" id="IPR041872">
    <property type="entry name" value="Anticodon_Met"/>
</dbReference>
<dbReference type="InterPro" id="IPR004495">
    <property type="entry name" value="Met-tRNA-synth_bsu_C"/>
</dbReference>
<dbReference type="InterPro" id="IPR014758">
    <property type="entry name" value="Met-tRNA_synth"/>
</dbReference>
<dbReference type="InterPro" id="IPR023457">
    <property type="entry name" value="Met-tRNA_synth_2"/>
</dbReference>
<dbReference type="InterPro" id="IPR015413">
    <property type="entry name" value="Methionyl/Leucyl_tRNA_Synth"/>
</dbReference>
<dbReference type="InterPro" id="IPR033911">
    <property type="entry name" value="MetRS_core"/>
</dbReference>
<dbReference type="InterPro" id="IPR012340">
    <property type="entry name" value="NA-bd_OB-fold"/>
</dbReference>
<dbReference type="InterPro" id="IPR014729">
    <property type="entry name" value="Rossmann-like_a/b/a_fold"/>
</dbReference>
<dbReference type="InterPro" id="IPR002547">
    <property type="entry name" value="tRNA-bd_dom"/>
</dbReference>
<dbReference type="InterPro" id="IPR009080">
    <property type="entry name" value="tRNAsynth_Ia_anticodon-bd"/>
</dbReference>
<dbReference type="NCBIfam" id="TIGR00398">
    <property type="entry name" value="metG"/>
    <property type="match status" value="1"/>
</dbReference>
<dbReference type="NCBIfam" id="TIGR00399">
    <property type="entry name" value="metG_C_term"/>
    <property type="match status" value="1"/>
</dbReference>
<dbReference type="NCBIfam" id="NF008900">
    <property type="entry name" value="PRK12267.1"/>
    <property type="match status" value="1"/>
</dbReference>
<dbReference type="PANTHER" id="PTHR43326:SF1">
    <property type="entry name" value="METHIONINE--TRNA LIGASE, MITOCHONDRIAL"/>
    <property type="match status" value="1"/>
</dbReference>
<dbReference type="PANTHER" id="PTHR43326">
    <property type="entry name" value="METHIONYL-TRNA SYNTHETASE"/>
    <property type="match status" value="1"/>
</dbReference>
<dbReference type="Pfam" id="PF19303">
    <property type="entry name" value="Anticodon_3"/>
    <property type="match status" value="1"/>
</dbReference>
<dbReference type="Pfam" id="PF09334">
    <property type="entry name" value="tRNA-synt_1g"/>
    <property type="match status" value="1"/>
</dbReference>
<dbReference type="Pfam" id="PF01588">
    <property type="entry name" value="tRNA_bind"/>
    <property type="match status" value="1"/>
</dbReference>
<dbReference type="PRINTS" id="PR01041">
    <property type="entry name" value="TRNASYNTHMET"/>
</dbReference>
<dbReference type="SUPFAM" id="SSF47323">
    <property type="entry name" value="Anticodon-binding domain of a subclass of class I aminoacyl-tRNA synthetases"/>
    <property type="match status" value="1"/>
</dbReference>
<dbReference type="SUPFAM" id="SSF50249">
    <property type="entry name" value="Nucleic acid-binding proteins"/>
    <property type="match status" value="1"/>
</dbReference>
<dbReference type="SUPFAM" id="SSF52374">
    <property type="entry name" value="Nucleotidylyl transferase"/>
    <property type="match status" value="1"/>
</dbReference>
<dbReference type="PROSITE" id="PS00178">
    <property type="entry name" value="AA_TRNA_LIGASE_I"/>
    <property type="match status" value="1"/>
</dbReference>
<dbReference type="PROSITE" id="PS50886">
    <property type="entry name" value="TRBD"/>
    <property type="match status" value="1"/>
</dbReference>